<evidence type="ECO:0000250" key="1"/>
<evidence type="ECO:0000255" key="2"/>
<evidence type="ECO:0000305" key="3"/>
<dbReference type="EMBL" id="S70834">
    <property type="protein sequence ID" value="AAB30867.1"/>
    <property type="molecule type" value="mRNA"/>
</dbReference>
<dbReference type="SMR" id="P45657"/>
<dbReference type="GlyCosmos" id="P45657">
    <property type="glycosylation" value="1 site, No reported glycans"/>
</dbReference>
<dbReference type="Proteomes" id="UP000694412">
    <property type="component" value="Unplaced"/>
</dbReference>
<dbReference type="GO" id="GO:0005737">
    <property type="term" value="C:cytoplasm"/>
    <property type="evidence" value="ECO:0007669"/>
    <property type="project" value="TreeGrafter"/>
</dbReference>
<dbReference type="GO" id="GO:0005615">
    <property type="term" value="C:extracellular space"/>
    <property type="evidence" value="ECO:0007669"/>
    <property type="project" value="TreeGrafter"/>
</dbReference>
<dbReference type="GO" id="GO:0005179">
    <property type="term" value="F:hormone activity"/>
    <property type="evidence" value="ECO:0007669"/>
    <property type="project" value="UniProtKB-KW"/>
</dbReference>
<dbReference type="GO" id="GO:0007186">
    <property type="term" value="P:G protein-coupled receptor signaling pathway"/>
    <property type="evidence" value="ECO:0007669"/>
    <property type="project" value="TreeGrafter"/>
</dbReference>
<dbReference type="GO" id="GO:0033574">
    <property type="term" value="P:response to testosterone"/>
    <property type="evidence" value="ECO:0000304"/>
    <property type="project" value="AgBase"/>
</dbReference>
<dbReference type="CDD" id="cd00069">
    <property type="entry name" value="GHB_like"/>
    <property type="match status" value="1"/>
</dbReference>
<dbReference type="FunFam" id="2.10.90.10:FF:000007">
    <property type="entry name" value="Luteinizing hormone beta subunit"/>
    <property type="match status" value="1"/>
</dbReference>
<dbReference type="Gene3D" id="2.10.90.10">
    <property type="entry name" value="Cystine-knot cytokines"/>
    <property type="match status" value="1"/>
</dbReference>
<dbReference type="InterPro" id="IPR029034">
    <property type="entry name" value="Cystine-knot_cytokine"/>
</dbReference>
<dbReference type="InterPro" id="IPR006208">
    <property type="entry name" value="Glyco_hormone_CN"/>
</dbReference>
<dbReference type="InterPro" id="IPR001545">
    <property type="entry name" value="Gonadotropin_bsu"/>
</dbReference>
<dbReference type="InterPro" id="IPR018245">
    <property type="entry name" value="Gonadotropin_bsu_CS"/>
</dbReference>
<dbReference type="PANTHER" id="PTHR11515">
    <property type="entry name" value="GLYCOPROTEIN HORMONE BETA CHAIN"/>
    <property type="match status" value="1"/>
</dbReference>
<dbReference type="PANTHER" id="PTHR11515:SF11">
    <property type="entry name" value="LUTROPIN SUBUNIT BETA"/>
    <property type="match status" value="1"/>
</dbReference>
<dbReference type="Pfam" id="PF00007">
    <property type="entry name" value="Cys_knot"/>
    <property type="match status" value="1"/>
</dbReference>
<dbReference type="SMART" id="SM00068">
    <property type="entry name" value="GHB"/>
    <property type="match status" value="1"/>
</dbReference>
<dbReference type="SUPFAM" id="SSF57501">
    <property type="entry name" value="Cystine-knot cytokines"/>
    <property type="match status" value="1"/>
</dbReference>
<dbReference type="PROSITE" id="PS00261">
    <property type="entry name" value="GLYCO_HORMONE_BETA_1"/>
    <property type="match status" value="1"/>
</dbReference>
<dbReference type="PROSITE" id="PS00689">
    <property type="entry name" value="GLYCO_HORMONE_BETA_2"/>
    <property type="match status" value="1"/>
</dbReference>
<feature type="signal peptide" evidence="2">
    <location>
        <begin position="1"/>
        <end position="21"/>
    </location>
</feature>
<feature type="chain" id="PRO_0000011739" description="Lutropin subunit beta">
    <location>
        <begin position="22"/>
        <end position="166"/>
    </location>
</feature>
<feature type="glycosylation site" description="N-linked (GlcNAc...) asparagine" evidence="2">
    <location>
        <position position="60"/>
    </location>
</feature>
<feature type="disulfide bond" evidence="1">
    <location>
        <begin position="56"/>
        <end position="104"/>
    </location>
</feature>
<feature type="disulfide bond" evidence="1">
    <location>
        <begin position="70"/>
        <end position="119"/>
    </location>
</feature>
<feature type="disulfide bond" evidence="1">
    <location>
        <begin position="73"/>
        <end position="157"/>
    </location>
</feature>
<feature type="disulfide bond" evidence="1">
    <location>
        <begin position="81"/>
        <end position="135"/>
    </location>
</feature>
<feature type="disulfide bond" evidence="1">
    <location>
        <begin position="85"/>
        <end position="137"/>
    </location>
</feature>
<feature type="disulfide bond" evidence="1">
    <location>
        <begin position="140"/>
        <end position="147"/>
    </location>
</feature>
<name>LSHB_COTJA</name>
<protein>
    <recommendedName>
        <fullName>Lutropin subunit beta</fullName>
        <shortName>Lutropin beta chain</shortName>
    </recommendedName>
    <alternativeName>
        <fullName>Luteinizing hormone subunit beta</fullName>
        <shortName>LH-B</shortName>
        <shortName>LSH-B</shortName>
        <shortName>LSH-beta</shortName>
    </alternativeName>
</protein>
<reference key="1">
    <citation type="journal article" date="1994" name="Gen. Comp. Endocrinol.">
        <title>Molecular cloning of complementary deoxyribonucleic acids for the pituitary glycoprotein hormone alpha-subunit and luteinizing hormone beta-subunit precursor molecules of Japanese quail (Coturnix coturnix japonica).</title>
        <authorList>
            <person name="Ando H."/>
            <person name="Ishii S."/>
        </authorList>
    </citation>
    <scope>NUCLEOTIDE SEQUENCE [MRNA]</scope>
</reference>
<organism>
    <name type="scientific">Coturnix japonica</name>
    <name type="common">Japanese quail</name>
    <name type="synonym">Coturnix coturnix japonica</name>
    <dbReference type="NCBI Taxonomy" id="93934"/>
    <lineage>
        <taxon>Eukaryota</taxon>
        <taxon>Metazoa</taxon>
        <taxon>Chordata</taxon>
        <taxon>Craniata</taxon>
        <taxon>Vertebrata</taxon>
        <taxon>Euteleostomi</taxon>
        <taxon>Archelosauria</taxon>
        <taxon>Archosauria</taxon>
        <taxon>Dinosauria</taxon>
        <taxon>Saurischia</taxon>
        <taxon>Theropoda</taxon>
        <taxon>Coelurosauria</taxon>
        <taxon>Aves</taxon>
        <taxon>Neognathae</taxon>
        <taxon>Galloanserae</taxon>
        <taxon>Galliformes</taxon>
        <taxon>Phasianidae</taxon>
        <taxon>Perdicinae</taxon>
        <taxon>Coturnix</taxon>
    </lineage>
</organism>
<proteinExistence type="evidence at transcript level"/>
<gene>
    <name type="primary">LHB</name>
</gene>
<keyword id="KW-1015">Disulfide bond</keyword>
<keyword id="KW-0325">Glycoprotein</keyword>
<keyword id="KW-0372">Hormone</keyword>
<keyword id="KW-1185">Reference proteome</keyword>
<keyword id="KW-0964">Secreted</keyword>
<keyword id="KW-0732">Signal</keyword>
<accession>P45657</accession>
<sequence>MGGAQVLLLLTLLGTPLVTHGTPPLVVDPSIGSQLGLGSVLGLDLGSMGGSGRPPCRPINVTVAVEKEECPQCMAVTTTACGGYCRTREPVYRSPLGPPPQSSCTYGALRYERWDLWGCPIGSDPKVILPVALSCRCARCPIATSDCTVQGLGPAFCGAPGGFGGQ</sequence>
<comment type="function">
    <text>Promotes spermatogenesis and ovulation by stimulating the testes and ovaries to synthesize steroids.</text>
</comment>
<comment type="subunit">
    <text>Heterodimer of a common alpha chain and a unique beta chain which confers biological specificity to thyrotropin, lutropin, follitropin and gonadotropin.</text>
</comment>
<comment type="subcellular location">
    <subcellularLocation>
        <location>Secreted</location>
    </subcellularLocation>
</comment>
<comment type="similarity">
    <text evidence="3">Belongs to the glycoprotein hormones subunit beta family.</text>
</comment>